<accession>P55882</accession>
<dbReference type="EC" id="2.7.1.49" evidence="1"/>
<dbReference type="EC" id="2.7.4.7" evidence="1"/>
<dbReference type="EMBL" id="U87940">
    <property type="protein sequence ID" value="AAB66492.1"/>
    <property type="molecule type" value="Genomic_DNA"/>
</dbReference>
<dbReference type="EMBL" id="AE006468">
    <property type="protein sequence ID" value="AAL21049.1"/>
    <property type="molecule type" value="Genomic_DNA"/>
</dbReference>
<dbReference type="RefSeq" id="NP_461090.1">
    <property type="nucleotide sequence ID" value="NC_003197.2"/>
</dbReference>
<dbReference type="RefSeq" id="WP_001188957.1">
    <property type="nucleotide sequence ID" value="NC_003197.2"/>
</dbReference>
<dbReference type="PDB" id="1JXH">
    <property type="method" value="X-ray"/>
    <property type="resolution" value="2.30 A"/>
    <property type="chains" value="A/B=1-266"/>
</dbReference>
<dbReference type="PDB" id="1JXI">
    <property type="method" value="X-ray"/>
    <property type="resolution" value="2.64 A"/>
    <property type="chains" value="A/B=1-266"/>
</dbReference>
<dbReference type="PDBsum" id="1JXH"/>
<dbReference type="PDBsum" id="1JXI"/>
<dbReference type="SMR" id="P55882"/>
<dbReference type="STRING" id="99287.STM2146"/>
<dbReference type="DrugBank" id="DB02022">
    <property type="generic name" value="4-Amino-5-Hydroxymethyl-2-Methylpyrimidine"/>
</dbReference>
<dbReference type="PaxDb" id="99287-STM2146"/>
<dbReference type="GeneID" id="1253667"/>
<dbReference type="KEGG" id="stm:STM2146"/>
<dbReference type="PATRIC" id="fig|99287.12.peg.2271"/>
<dbReference type="HOGENOM" id="CLU_020520_0_1_6"/>
<dbReference type="OMA" id="NRHTHGT"/>
<dbReference type="PhylomeDB" id="P55882"/>
<dbReference type="BioCyc" id="SENT99287:STM2146-MONOMER"/>
<dbReference type="BRENDA" id="2.7.1.49">
    <property type="organism ID" value="5542"/>
</dbReference>
<dbReference type="BRENDA" id="2.7.4.7">
    <property type="organism ID" value="5542"/>
</dbReference>
<dbReference type="UniPathway" id="UPA00060">
    <property type="reaction ID" value="UER00137"/>
</dbReference>
<dbReference type="UniPathway" id="UPA00060">
    <property type="reaction ID" value="UER00138"/>
</dbReference>
<dbReference type="EvolutionaryTrace" id="P55882"/>
<dbReference type="Proteomes" id="UP000001014">
    <property type="component" value="Chromosome"/>
</dbReference>
<dbReference type="GO" id="GO:0005829">
    <property type="term" value="C:cytosol"/>
    <property type="evidence" value="ECO:0000318"/>
    <property type="project" value="GO_Central"/>
</dbReference>
<dbReference type="GO" id="GO:0005524">
    <property type="term" value="F:ATP binding"/>
    <property type="evidence" value="ECO:0007669"/>
    <property type="project" value="UniProtKB-KW"/>
</dbReference>
<dbReference type="GO" id="GO:0008902">
    <property type="term" value="F:hydroxymethylpyrimidine kinase activity"/>
    <property type="evidence" value="ECO:0000318"/>
    <property type="project" value="GO_Central"/>
</dbReference>
<dbReference type="GO" id="GO:0008972">
    <property type="term" value="F:phosphomethylpyrimidine kinase activity"/>
    <property type="evidence" value="ECO:0000318"/>
    <property type="project" value="GO_Central"/>
</dbReference>
<dbReference type="GO" id="GO:0009228">
    <property type="term" value="P:thiamine biosynthetic process"/>
    <property type="evidence" value="ECO:0000318"/>
    <property type="project" value="GO_Central"/>
</dbReference>
<dbReference type="GO" id="GO:0009229">
    <property type="term" value="P:thiamine diphosphate biosynthetic process"/>
    <property type="evidence" value="ECO:0007669"/>
    <property type="project" value="UniProtKB-UniPathway"/>
</dbReference>
<dbReference type="CDD" id="cd01169">
    <property type="entry name" value="HMPP_kinase"/>
    <property type="match status" value="1"/>
</dbReference>
<dbReference type="FunFam" id="3.40.1190.20:FF:000003">
    <property type="entry name" value="Phosphomethylpyrimidine kinase ThiD"/>
    <property type="match status" value="1"/>
</dbReference>
<dbReference type="Gene3D" id="3.40.1190.20">
    <property type="match status" value="1"/>
</dbReference>
<dbReference type="InterPro" id="IPR004399">
    <property type="entry name" value="HMP/HMP-P_kinase_dom"/>
</dbReference>
<dbReference type="InterPro" id="IPR013749">
    <property type="entry name" value="PM/HMP-P_kinase-1"/>
</dbReference>
<dbReference type="InterPro" id="IPR029056">
    <property type="entry name" value="Ribokinase-like"/>
</dbReference>
<dbReference type="NCBIfam" id="TIGR00097">
    <property type="entry name" value="HMP-P_kinase"/>
    <property type="match status" value="1"/>
</dbReference>
<dbReference type="PANTHER" id="PTHR20858:SF17">
    <property type="entry name" value="HYDROXYMETHYLPYRIMIDINE_PHOSPHOMETHYLPYRIMIDINE KINASE THI20-RELATED"/>
    <property type="match status" value="1"/>
</dbReference>
<dbReference type="PANTHER" id="PTHR20858">
    <property type="entry name" value="PHOSPHOMETHYLPYRIMIDINE KINASE"/>
    <property type="match status" value="1"/>
</dbReference>
<dbReference type="Pfam" id="PF08543">
    <property type="entry name" value="Phos_pyr_kin"/>
    <property type="match status" value="1"/>
</dbReference>
<dbReference type="SUPFAM" id="SSF53613">
    <property type="entry name" value="Ribokinase-like"/>
    <property type="match status" value="1"/>
</dbReference>
<proteinExistence type="evidence at protein level"/>
<keyword id="KW-0002">3D-structure</keyword>
<keyword id="KW-0067">ATP-binding</keyword>
<keyword id="KW-0418">Kinase</keyword>
<keyword id="KW-0547">Nucleotide-binding</keyword>
<keyword id="KW-1185">Reference proteome</keyword>
<keyword id="KW-0784">Thiamine biosynthesis</keyword>
<keyword id="KW-0808">Transferase</keyword>
<name>THID_SALTY</name>
<comment type="function">
    <text evidence="1">Catalyzes the phosphorylation of hydroxymethylpyrimidine phosphate (HMP-P) to HMP-PP, and of HMP to HMP-P.</text>
</comment>
<comment type="catalytic activity">
    <reaction evidence="1">
        <text>4-amino-5-hydroxymethyl-2-methylpyrimidine + ATP = 4-amino-2-methyl-5-(phosphooxymethyl)pyrimidine + ADP + H(+)</text>
        <dbReference type="Rhea" id="RHEA:23096"/>
        <dbReference type="ChEBI" id="CHEBI:15378"/>
        <dbReference type="ChEBI" id="CHEBI:16892"/>
        <dbReference type="ChEBI" id="CHEBI:30616"/>
        <dbReference type="ChEBI" id="CHEBI:58354"/>
        <dbReference type="ChEBI" id="CHEBI:456216"/>
        <dbReference type="EC" id="2.7.1.49"/>
    </reaction>
</comment>
<comment type="catalytic activity">
    <reaction evidence="1">
        <text>4-amino-2-methyl-5-(phosphooxymethyl)pyrimidine + ATP = 4-amino-2-methyl-5-(diphosphooxymethyl)pyrimidine + ADP</text>
        <dbReference type="Rhea" id="RHEA:19893"/>
        <dbReference type="ChEBI" id="CHEBI:30616"/>
        <dbReference type="ChEBI" id="CHEBI:57841"/>
        <dbReference type="ChEBI" id="CHEBI:58354"/>
        <dbReference type="ChEBI" id="CHEBI:456216"/>
        <dbReference type="EC" id="2.7.4.7"/>
    </reaction>
</comment>
<comment type="pathway">
    <text>Cofactor biosynthesis; thiamine diphosphate biosynthesis; 4-amino-2-methyl-5-diphosphomethylpyrimidine from 5-amino-1-(5-phospho-D-ribosyl)imidazole: step 2/3.</text>
</comment>
<comment type="pathway">
    <text>Cofactor biosynthesis; thiamine diphosphate biosynthesis; 4-amino-2-methyl-5-diphosphomethylpyrimidine from 5-amino-1-(5-phospho-D-ribosyl)imidazole: step 3/3.</text>
</comment>
<comment type="subunit">
    <text evidence="2">Homodimer.</text>
</comment>
<comment type="similarity">
    <text evidence="3">Belongs to the ThiD family.</text>
</comment>
<feature type="chain" id="PRO_0000192026" description="Hydroxymethylpyrimidine/phosphomethylpyrimidine kinase">
    <location>
        <begin position="1"/>
        <end position="266"/>
    </location>
</feature>
<feature type="binding site" evidence="2">
    <location>
        <position position="44"/>
    </location>
    <ligand>
        <name>4-amino-5-hydroxymethyl-2-methylpyrimidine</name>
        <dbReference type="ChEBI" id="CHEBI:16892"/>
    </ligand>
</feature>
<feature type="sequence conflict" description="In Ref. 1; AAB66492." evidence="3" ref="1">
    <original>Q</original>
    <variation>E</variation>
    <location>
        <position position="44"/>
    </location>
</feature>
<feature type="strand" evidence="4">
    <location>
        <begin position="5"/>
        <end position="11"/>
    </location>
</feature>
<feature type="strand" evidence="4">
    <location>
        <begin position="16"/>
        <end position="18"/>
    </location>
</feature>
<feature type="helix" evidence="4">
    <location>
        <begin position="19"/>
        <end position="29"/>
    </location>
</feature>
<feature type="strand" evidence="4">
    <location>
        <begin position="33"/>
        <end position="45"/>
    </location>
</feature>
<feature type="strand" evidence="4">
    <location>
        <begin position="48"/>
        <end position="54"/>
    </location>
</feature>
<feature type="helix" evidence="4">
    <location>
        <begin position="57"/>
        <end position="68"/>
    </location>
</feature>
<feature type="strand" evidence="4">
    <location>
        <begin position="74"/>
        <end position="78"/>
    </location>
</feature>
<feature type="helix" evidence="4">
    <location>
        <begin position="84"/>
        <end position="96"/>
    </location>
</feature>
<feature type="strand" evidence="4">
    <location>
        <begin position="101"/>
        <end position="105"/>
    </location>
</feature>
<feature type="helix" evidence="4">
    <location>
        <begin position="119"/>
        <end position="128"/>
    </location>
</feature>
<feature type="helix" evidence="4">
    <location>
        <begin position="130"/>
        <end position="132"/>
    </location>
</feature>
<feature type="strand" evidence="4">
    <location>
        <begin position="134"/>
        <end position="137"/>
    </location>
</feature>
<feature type="helix" evidence="4">
    <location>
        <begin position="140"/>
        <end position="147"/>
    </location>
</feature>
<feature type="helix" evidence="4">
    <location>
        <begin position="155"/>
        <end position="167"/>
    </location>
</feature>
<feature type="strand" evidence="4">
    <location>
        <begin position="171"/>
        <end position="176"/>
    </location>
</feature>
<feature type="strand" evidence="4">
    <location>
        <begin position="188"/>
        <end position="190"/>
    </location>
</feature>
<feature type="strand" evidence="4">
    <location>
        <begin position="195"/>
        <end position="197"/>
    </location>
</feature>
<feature type="helix" evidence="4">
    <location>
        <begin position="211"/>
        <end position="222"/>
    </location>
</feature>
<feature type="helix" evidence="4">
    <location>
        <begin position="223"/>
        <end position="225"/>
    </location>
</feature>
<feature type="strand" evidence="4">
    <location>
        <begin position="226"/>
        <end position="228"/>
    </location>
</feature>
<feature type="helix" evidence="4">
    <location>
        <begin position="229"/>
        <end position="244"/>
    </location>
</feature>
<feature type="helix" evidence="4">
    <location>
        <begin position="245"/>
        <end position="249"/>
    </location>
</feature>
<feature type="strand" evidence="4">
    <location>
        <begin position="254"/>
        <end position="256"/>
    </location>
</feature>
<feature type="turn" evidence="4">
    <location>
        <begin position="261"/>
        <end position="265"/>
    </location>
</feature>
<reference key="1">
    <citation type="journal article" date="1997" name="J. Bacteriol.">
        <title>Identification and characterization of an operon in Salmonella typhimurium involved in thiamine biosynthesis.</title>
        <authorList>
            <person name="Petersen L.A."/>
            <person name="Downs D.M."/>
        </authorList>
    </citation>
    <scope>NUCLEOTIDE SEQUENCE [GENOMIC DNA]</scope>
    <source>
        <strain>LT2</strain>
    </source>
</reference>
<reference key="2">
    <citation type="journal article" date="2001" name="Nature">
        <title>Complete genome sequence of Salmonella enterica serovar Typhimurium LT2.</title>
        <authorList>
            <person name="McClelland M."/>
            <person name="Sanderson K.E."/>
            <person name="Spieth J."/>
            <person name="Clifton S.W."/>
            <person name="Latreille P."/>
            <person name="Courtney L."/>
            <person name="Porwollik S."/>
            <person name="Ali J."/>
            <person name="Dante M."/>
            <person name="Du F."/>
            <person name="Hou S."/>
            <person name="Layman D."/>
            <person name="Leonard S."/>
            <person name="Nguyen C."/>
            <person name="Scott K."/>
            <person name="Holmes A."/>
            <person name="Grewal N."/>
            <person name="Mulvaney E."/>
            <person name="Ryan E."/>
            <person name="Sun H."/>
            <person name="Florea L."/>
            <person name="Miller W."/>
            <person name="Stoneking T."/>
            <person name="Nhan M."/>
            <person name="Waterston R."/>
            <person name="Wilson R.K."/>
        </authorList>
    </citation>
    <scope>NUCLEOTIDE SEQUENCE [LARGE SCALE GENOMIC DNA]</scope>
    <source>
        <strain>LT2 / SGSC1412 / ATCC 700720</strain>
    </source>
</reference>
<reference key="3">
    <citation type="journal article" date="2002" name="Structure">
        <title>Crystal structure of 4-amino-5-hydroxymethyl-2-methylpyrimidine phosphate kinase from Salmonella typhimurium at 2.3 A resolution.</title>
        <authorList>
            <person name="Cheng G."/>
            <person name="Bennett E.M."/>
            <person name="Begley T.P."/>
            <person name="Ealick S.E."/>
        </authorList>
    </citation>
    <scope>X-RAY CRYSTALLOGRAPHY (2.3 ANGSTROMS) OF APOENZYME AND IN COMPLEX WITH 4-AMINO-5-HYDROXYMETHYL-2-METHYLPYRIMIDINE</scope>
    <scope>SUBUNIT</scope>
</reference>
<evidence type="ECO:0000250" key="1">
    <source>
        <dbReference type="UniProtKB" id="P76422"/>
    </source>
</evidence>
<evidence type="ECO:0000269" key="2">
    <source>
    </source>
</evidence>
<evidence type="ECO:0000305" key="3"/>
<evidence type="ECO:0007829" key="4">
    <source>
        <dbReference type="PDB" id="1JXH"/>
    </source>
</evidence>
<organism>
    <name type="scientific">Salmonella typhimurium (strain LT2 / SGSC1412 / ATCC 700720)</name>
    <dbReference type="NCBI Taxonomy" id="99287"/>
    <lineage>
        <taxon>Bacteria</taxon>
        <taxon>Pseudomonadati</taxon>
        <taxon>Pseudomonadota</taxon>
        <taxon>Gammaproteobacteria</taxon>
        <taxon>Enterobacterales</taxon>
        <taxon>Enterobacteriaceae</taxon>
        <taxon>Salmonella</taxon>
    </lineage>
</organism>
<protein>
    <recommendedName>
        <fullName>Hydroxymethylpyrimidine/phosphomethylpyrimidine kinase</fullName>
        <ecNumber evidence="1">2.7.1.49</ecNumber>
        <ecNumber evidence="1">2.7.4.7</ecNumber>
    </recommendedName>
    <alternativeName>
        <fullName>Hydroxymethylpyrimidine kinase</fullName>
        <shortName>HMP kinase</shortName>
    </alternativeName>
    <alternativeName>
        <fullName>Hydroxymethylpyrimidine phosphate kinase</fullName>
        <shortName>HMP-P kinase</shortName>
        <shortName>HMP-phosphate kinase</shortName>
        <shortName>HMPP kinase</shortName>
    </alternativeName>
</protein>
<sequence length="266" mass="28544">MQRINALTIAGTDPSGGAGIQADLKTFSALGAYGCSVITALVAQNTCGVQSVYRIEPDFVAAQLDSVFSDVRIDTTKIGMLAETDIVEAVAERLQRHHVRNVVLDTVMLAKSGDPLLSPSAIETLRVRLLPQVSLITPNLPEAAALLDAPHARTEQEMLAQGRALLAMGCEAVLMKGGHLEDAQSPDWLFTREGEQRFSAPRVNTKNTHGTGCTLSAALAALRPRHRSWGETVNEAKAWLSAALAQADTLEVGKGIGPVHHFHAWW</sequence>
<gene>
    <name type="primary">thiD</name>
    <name type="ordered locus">STM2146</name>
</gene>